<evidence type="ECO:0000255" key="1">
    <source>
        <dbReference type="HAMAP-Rule" id="MF_00168"/>
    </source>
</evidence>
<feature type="chain" id="PRO_0000135557" description="Queuine tRNA-ribosyltransferase">
    <location>
        <begin position="1"/>
        <end position="381"/>
    </location>
</feature>
<feature type="region of interest" description="RNA binding" evidence="1">
    <location>
        <begin position="248"/>
        <end position="254"/>
    </location>
</feature>
<feature type="region of interest" description="RNA binding; important for wobble base 34 recognition" evidence="1">
    <location>
        <begin position="272"/>
        <end position="276"/>
    </location>
</feature>
<feature type="active site" description="Proton acceptor" evidence="1">
    <location>
        <position position="92"/>
    </location>
</feature>
<feature type="active site" description="Nucleophile" evidence="1">
    <location>
        <position position="267"/>
    </location>
</feature>
<feature type="binding site" evidence="1">
    <location>
        <begin position="92"/>
        <end position="96"/>
    </location>
    <ligand>
        <name>substrate</name>
    </ligand>
</feature>
<feature type="binding site" evidence="1">
    <location>
        <position position="146"/>
    </location>
    <ligand>
        <name>substrate</name>
    </ligand>
</feature>
<feature type="binding site" evidence="1">
    <location>
        <position position="190"/>
    </location>
    <ligand>
        <name>substrate</name>
    </ligand>
</feature>
<feature type="binding site" evidence="1">
    <location>
        <position position="217"/>
    </location>
    <ligand>
        <name>substrate</name>
    </ligand>
</feature>
<feature type="binding site" evidence="1">
    <location>
        <position position="305"/>
    </location>
    <ligand>
        <name>Zn(2+)</name>
        <dbReference type="ChEBI" id="CHEBI:29105"/>
    </ligand>
</feature>
<feature type="binding site" evidence="1">
    <location>
        <position position="307"/>
    </location>
    <ligand>
        <name>Zn(2+)</name>
        <dbReference type="ChEBI" id="CHEBI:29105"/>
    </ligand>
</feature>
<feature type="binding site" evidence="1">
    <location>
        <position position="310"/>
    </location>
    <ligand>
        <name>Zn(2+)</name>
        <dbReference type="ChEBI" id="CHEBI:29105"/>
    </ligand>
</feature>
<feature type="binding site" evidence="1">
    <location>
        <position position="337"/>
    </location>
    <ligand>
        <name>Zn(2+)</name>
        <dbReference type="ChEBI" id="CHEBI:29105"/>
    </ligand>
</feature>
<accession>Q8P868</accession>
<proteinExistence type="inferred from homology"/>
<name>TGT_XANCP</name>
<organism>
    <name type="scientific">Xanthomonas campestris pv. campestris (strain ATCC 33913 / DSM 3586 / NCPPB 528 / LMG 568 / P 25)</name>
    <dbReference type="NCBI Taxonomy" id="190485"/>
    <lineage>
        <taxon>Bacteria</taxon>
        <taxon>Pseudomonadati</taxon>
        <taxon>Pseudomonadota</taxon>
        <taxon>Gammaproteobacteria</taxon>
        <taxon>Lysobacterales</taxon>
        <taxon>Lysobacteraceae</taxon>
        <taxon>Xanthomonas</taxon>
    </lineage>
</organism>
<gene>
    <name evidence="1" type="primary">tgt</name>
    <name type="ordered locus">XCC2378</name>
</gene>
<dbReference type="EC" id="2.4.2.29" evidence="1"/>
<dbReference type="EMBL" id="AE008922">
    <property type="protein sequence ID" value="AAM41656.1"/>
    <property type="molecule type" value="Genomic_DNA"/>
</dbReference>
<dbReference type="RefSeq" id="NP_637732.1">
    <property type="nucleotide sequence ID" value="NC_003902.1"/>
</dbReference>
<dbReference type="RefSeq" id="WP_011037520.1">
    <property type="nucleotide sequence ID" value="NC_003902.1"/>
</dbReference>
<dbReference type="SMR" id="Q8P868"/>
<dbReference type="STRING" id="190485.XCC2378"/>
<dbReference type="EnsemblBacteria" id="AAM41656">
    <property type="protein sequence ID" value="AAM41656"/>
    <property type="gene ID" value="XCC2378"/>
</dbReference>
<dbReference type="KEGG" id="xcc:XCC2378"/>
<dbReference type="PATRIC" id="fig|190485.4.peg.2532"/>
<dbReference type="eggNOG" id="COG0343">
    <property type="taxonomic scope" value="Bacteria"/>
</dbReference>
<dbReference type="HOGENOM" id="CLU_022060_0_1_6"/>
<dbReference type="OrthoDB" id="9805417at2"/>
<dbReference type="UniPathway" id="UPA00392"/>
<dbReference type="Proteomes" id="UP000001010">
    <property type="component" value="Chromosome"/>
</dbReference>
<dbReference type="GO" id="GO:0005737">
    <property type="term" value="C:cytoplasm"/>
    <property type="evidence" value="ECO:0000318"/>
    <property type="project" value="GO_Central"/>
</dbReference>
<dbReference type="GO" id="GO:0005829">
    <property type="term" value="C:cytosol"/>
    <property type="evidence" value="ECO:0000318"/>
    <property type="project" value="GO_Central"/>
</dbReference>
<dbReference type="GO" id="GO:0046872">
    <property type="term" value="F:metal ion binding"/>
    <property type="evidence" value="ECO:0007669"/>
    <property type="project" value="UniProtKB-KW"/>
</dbReference>
<dbReference type="GO" id="GO:0008479">
    <property type="term" value="F:tRNA-guanosine(34) queuine transglycosylase activity"/>
    <property type="evidence" value="ECO:0007669"/>
    <property type="project" value="UniProtKB-UniRule"/>
</dbReference>
<dbReference type="GO" id="GO:0008616">
    <property type="term" value="P:queuosine biosynthetic process"/>
    <property type="evidence" value="ECO:0000318"/>
    <property type="project" value="GO_Central"/>
</dbReference>
<dbReference type="GO" id="GO:0002099">
    <property type="term" value="P:tRNA wobble guanine modification"/>
    <property type="evidence" value="ECO:0000318"/>
    <property type="project" value="GO_Central"/>
</dbReference>
<dbReference type="GO" id="GO:0101030">
    <property type="term" value="P:tRNA-guanine transglycosylation"/>
    <property type="evidence" value="ECO:0007669"/>
    <property type="project" value="InterPro"/>
</dbReference>
<dbReference type="FunFam" id="3.20.20.105:FF:000001">
    <property type="entry name" value="Queuine tRNA-ribosyltransferase"/>
    <property type="match status" value="1"/>
</dbReference>
<dbReference type="Gene3D" id="3.20.20.105">
    <property type="entry name" value="Queuine tRNA-ribosyltransferase-like"/>
    <property type="match status" value="1"/>
</dbReference>
<dbReference type="HAMAP" id="MF_00168">
    <property type="entry name" value="Q_tRNA_Tgt"/>
    <property type="match status" value="1"/>
</dbReference>
<dbReference type="InterPro" id="IPR050076">
    <property type="entry name" value="ArchSynthase1/Queuine_TRR"/>
</dbReference>
<dbReference type="InterPro" id="IPR004803">
    <property type="entry name" value="TGT"/>
</dbReference>
<dbReference type="InterPro" id="IPR036511">
    <property type="entry name" value="TGT-like_sf"/>
</dbReference>
<dbReference type="InterPro" id="IPR002616">
    <property type="entry name" value="tRNA_ribo_trans-like"/>
</dbReference>
<dbReference type="NCBIfam" id="TIGR00430">
    <property type="entry name" value="Q_tRNA_tgt"/>
    <property type="match status" value="1"/>
</dbReference>
<dbReference type="NCBIfam" id="TIGR00449">
    <property type="entry name" value="tgt_general"/>
    <property type="match status" value="1"/>
</dbReference>
<dbReference type="PANTHER" id="PTHR46499">
    <property type="entry name" value="QUEUINE TRNA-RIBOSYLTRANSFERASE"/>
    <property type="match status" value="1"/>
</dbReference>
<dbReference type="PANTHER" id="PTHR46499:SF1">
    <property type="entry name" value="QUEUINE TRNA-RIBOSYLTRANSFERASE"/>
    <property type="match status" value="1"/>
</dbReference>
<dbReference type="Pfam" id="PF01702">
    <property type="entry name" value="TGT"/>
    <property type="match status" value="1"/>
</dbReference>
<dbReference type="SUPFAM" id="SSF51713">
    <property type="entry name" value="tRNA-guanine transglycosylase"/>
    <property type="match status" value="1"/>
</dbReference>
<reference key="1">
    <citation type="journal article" date="2002" name="Nature">
        <title>Comparison of the genomes of two Xanthomonas pathogens with differing host specificities.</title>
        <authorList>
            <person name="da Silva A.C.R."/>
            <person name="Ferro J.A."/>
            <person name="Reinach F.C."/>
            <person name="Farah C.S."/>
            <person name="Furlan L.R."/>
            <person name="Quaggio R.B."/>
            <person name="Monteiro-Vitorello C.B."/>
            <person name="Van Sluys M.A."/>
            <person name="Almeida N.F. Jr."/>
            <person name="Alves L.M.C."/>
            <person name="do Amaral A.M."/>
            <person name="Bertolini M.C."/>
            <person name="Camargo L.E.A."/>
            <person name="Camarotte G."/>
            <person name="Cannavan F."/>
            <person name="Cardozo J."/>
            <person name="Chambergo F."/>
            <person name="Ciapina L.P."/>
            <person name="Cicarelli R.M.B."/>
            <person name="Coutinho L.L."/>
            <person name="Cursino-Santos J.R."/>
            <person name="El-Dorry H."/>
            <person name="Faria J.B."/>
            <person name="Ferreira A.J.S."/>
            <person name="Ferreira R.C.C."/>
            <person name="Ferro M.I.T."/>
            <person name="Formighieri E.F."/>
            <person name="Franco M.C."/>
            <person name="Greggio C.C."/>
            <person name="Gruber A."/>
            <person name="Katsuyama A.M."/>
            <person name="Kishi L.T."/>
            <person name="Leite R.P."/>
            <person name="Lemos E.G.M."/>
            <person name="Lemos M.V.F."/>
            <person name="Locali E.C."/>
            <person name="Machado M.A."/>
            <person name="Madeira A.M.B.N."/>
            <person name="Martinez-Rossi N.M."/>
            <person name="Martins E.C."/>
            <person name="Meidanis J."/>
            <person name="Menck C.F.M."/>
            <person name="Miyaki C.Y."/>
            <person name="Moon D.H."/>
            <person name="Moreira L.M."/>
            <person name="Novo M.T.M."/>
            <person name="Okura V.K."/>
            <person name="Oliveira M.C."/>
            <person name="Oliveira V.R."/>
            <person name="Pereira H.A."/>
            <person name="Rossi A."/>
            <person name="Sena J.A.D."/>
            <person name="Silva C."/>
            <person name="de Souza R.F."/>
            <person name="Spinola L.A.F."/>
            <person name="Takita M.A."/>
            <person name="Tamura R.E."/>
            <person name="Teixeira E.C."/>
            <person name="Tezza R.I.D."/>
            <person name="Trindade dos Santos M."/>
            <person name="Truffi D."/>
            <person name="Tsai S.M."/>
            <person name="White F.F."/>
            <person name="Setubal J.C."/>
            <person name="Kitajima J.P."/>
        </authorList>
    </citation>
    <scope>NUCLEOTIDE SEQUENCE [LARGE SCALE GENOMIC DNA]</scope>
    <source>
        <strain>ATCC 33913 / DSM 3586 / NCPPB 528 / LMG 568 / P 25</strain>
    </source>
</reference>
<sequence length="381" mass="42138">MSRLQFQLQTTDGHARRGRLTFPRGTVETPAFMPVGTYGSVKGILPEQIRALGAEIILGNTFHLYLRPGLDVIGDHGGLHGFARWDGPILTDSGGFQVFSLAHRRKITEQGVTFSSPNDGARVFLGPEESMQIQKVLDSDIVMIFDECTPYPATEDVARRSMELSLRWAQRSRQAHDGLGNDAALFGIVQGGVHPDLRSRSLDGLQAIGFDGYAIGGLAVGEPEHERNAMLEHLHPRLPAERPRYLMGVGRPEDLVEGVARGVDMFDCVMPTRNARNGHYFTSFGTVRIRNAKYERDLDTIEPGCGCHACSSGYTRAYLRHLDRCNEMLAPMLGTLHNLWYYEKLMADMRAAIAAGTFVEFRRSFYAARGATTPPLPGESS</sequence>
<keyword id="KW-0328">Glycosyltransferase</keyword>
<keyword id="KW-0479">Metal-binding</keyword>
<keyword id="KW-0671">Queuosine biosynthesis</keyword>
<keyword id="KW-1185">Reference proteome</keyword>
<keyword id="KW-0808">Transferase</keyword>
<keyword id="KW-0819">tRNA processing</keyword>
<keyword id="KW-0862">Zinc</keyword>
<comment type="function">
    <text evidence="1">Catalyzes the base-exchange of a guanine (G) residue with the queuine precursor 7-aminomethyl-7-deazaguanine (PreQ1) at position 34 (anticodon wobble position) in tRNAs with GU(N) anticodons (tRNA-Asp, -Asn, -His and -Tyr). Catalysis occurs through a double-displacement mechanism. The nucleophile active site attacks the C1' of nucleotide 34 to detach the guanine base from the RNA, forming a covalent enzyme-RNA intermediate. The proton acceptor active site deprotonates the incoming PreQ1, allowing a nucleophilic attack on the C1' of the ribose to form the product. After dissociation, two additional enzymatic reactions on the tRNA convert PreQ1 to queuine (Q), resulting in the hypermodified nucleoside queuosine (7-(((4,5-cis-dihydroxy-2-cyclopenten-1-yl)amino)methyl)-7-deazaguanosine).</text>
</comment>
<comment type="catalytic activity">
    <reaction evidence="1">
        <text>7-aminomethyl-7-carbaguanine + guanosine(34) in tRNA = 7-aminomethyl-7-carbaguanosine(34) in tRNA + guanine</text>
        <dbReference type="Rhea" id="RHEA:24104"/>
        <dbReference type="Rhea" id="RHEA-COMP:10341"/>
        <dbReference type="Rhea" id="RHEA-COMP:10342"/>
        <dbReference type="ChEBI" id="CHEBI:16235"/>
        <dbReference type="ChEBI" id="CHEBI:58703"/>
        <dbReference type="ChEBI" id="CHEBI:74269"/>
        <dbReference type="ChEBI" id="CHEBI:82833"/>
        <dbReference type="EC" id="2.4.2.29"/>
    </reaction>
</comment>
<comment type="cofactor">
    <cofactor evidence="1">
        <name>Zn(2+)</name>
        <dbReference type="ChEBI" id="CHEBI:29105"/>
    </cofactor>
    <text evidence="1">Binds 1 zinc ion per subunit.</text>
</comment>
<comment type="pathway">
    <text evidence="1">tRNA modification; tRNA-queuosine biosynthesis.</text>
</comment>
<comment type="subunit">
    <text evidence="1">Homodimer. Within each dimer, one monomer is responsible for RNA recognition and catalysis, while the other monomer binds to the replacement base PreQ1.</text>
</comment>
<comment type="similarity">
    <text evidence="1">Belongs to the queuine tRNA-ribosyltransferase family.</text>
</comment>
<protein>
    <recommendedName>
        <fullName evidence="1">Queuine tRNA-ribosyltransferase</fullName>
        <ecNumber evidence="1">2.4.2.29</ecNumber>
    </recommendedName>
    <alternativeName>
        <fullName evidence="1">Guanine insertion enzyme</fullName>
    </alternativeName>
    <alternativeName>
        <fullName evidence="1">tRNA-guanine transglycosylase</fullName>
    </alternativeName>
</protein>